<dbReference type="EMBL" id="Y08501">
    <property type="protein sequence ID" value="CAA69838.3"/>
    <property type="status" value="ALT_SEQ"/>
    <property type="molecule type" value="Genomic_DNA"/>
</dbReference>
<dbReference type="EMBL" id="JF729200">
    <property type="protein sequence ID" value="AEK01266.1"/>
    <property type="status" value="ALT_SEQ"/>
    <property type="molecule type" value="Genomic_DNA"/>
</dbReference>
<dbReference type="EMBL" id="JF729201">
    <property type="protein sequence ID" value="AEK01295.1"/>
    <property type="status" value="ALT_SEQ"/>
    <property type="molecule type" value="Genomic_DNA"/>
</dbReference>
<dbReference type="EMBL" id="JF729202">
    <property type="protein sequence ID" value="AEK01323.1"/>
    <property type="status" value="ALT_SEQ"/>
    <property type="molecule type" value="Genomic_DNA"/>
</dbReference>
<dbReference type="EMBL" id="BK010421">
    <property type="protein sequence ID" value="DAB41518.2"/>
    <property type="molecule type" value="Genomic_DNA"/>
</dbReference>
<dbReference type="EMBL" id="AC007143">
    <property type="protein sequence ID" value="AAM15421.1"/>
    <property type="status" value="ALT_SEQ"/>
    <property type="molecule type" value="Genomic_DNA"/>
</dbReference>
<dbReference type="EMBL" id="AC007730">
    <property type="protein sequence ID" value="AAM15516.1"/>
    <property type="status" value="ALT_SEQ"/>
    <property type="molecule type" value="Genomic_DNA"/>
</dbReference>
<dbReference type="EMBL" id="CP002685">
    <property type="protein sequence ID" value="AEC06070.1"/>
    <property type="status" value="ALT_SEQ"/>
    <property type="molecule type" value="Genomic_DNA"/>
</dbReference>
<dbReference type="EMBL" id="EF488948">
    <property type="protein sequence ID" value="ABS50660.1"/>
    <property type="molecule type" value="mRNA"/>
</dbReference>
<dbReference type="EMBL" id="EF488949">
    <property type="protein sequence ID" value="ABS50661.1"/>
    <property type="molecule type" value="mRNA"/>
</dbReference>
<dbReference type="RefSeq" id="NP_085552.2">
    <property type="nucleotide sequence ID" value="NC_001284.2"/>
</dbReference>
<dbReference type="RefSeq" id="NP_178773.1">
    <property type="nucleotide sequence ID" value="NM_126732.2"/>
</dbReference>
<dbReference type="PDB" id="6XYW">
    <property type="method" value="EM"/>
    <property type="resolution" value="3.86 A"/>
    <property type="chains" value="Bk=1-125"/>
</dbReference>
<dbReference type="PDBsum" id="6XYW"/>
<dbReference type="EMDB" id="EMD-10654"/>
<dbReference type="SMR" id="P92532"/>
<dbReference type="BioGRID" id="566539">
    <property type="interactions" value="1"/>
</dbReference>
<dbReference type="FunCoup" id="P92532">
    <property type="interactions" value="2502"/>
</dbReference>
<dbReference type="IntAct" id="P92532">
    <property type="interactions" value="1"/>
</dbReference>
<dbReference type="STRING" id="3702.A0A2P2CLH1"/>
<dbReference type="PaxDb" id="3702-AT2G07675.1"/>
<dbReference type="GeneID" id="815348"/>
<dbReference type="KEGG" id="ath:AT2G07675"/>
<dbReference type="Araport" id="AT2G07675"/>
<dbReference type="Araport" id="ATMG00980"/>
<dbReference type="TAIR" id="AT2G07675"/>
<dbReference type="TAIR" id="ATMG00980">
    <property type="gene designation" value="RPSL2"/>
</dbReference>
<dbReference type="eggNOG" id="KOG1750">
    <property type="taxonomic scope" value="Eukaryota"/>
</dbReference>
<dbReference type="HOGENOM" id="CLU_104295_1_2_1"/>
<dbReference type="InParanoid" id="P92532"/>
<dbReference type="OrthoDB" id="414309at2759"/>
<dbReference type="PhylomeDB" id="P92532"/>
<dbReference type="PRO" id="PR:P92532"/>
<dbReference type="Proteomes" id="UP000006548">
    <property type="component" value="Chromosome 2"/>
</dbReference>
<dbReference type="Proteomes" id="UP000006548">
    <property type="component" value="Mitochondrion MT"/>
</dbReference>
<dbReference type="ExpressionAtlas" id="P92532">
    <property type="expression patterns" value="baseline and differential"/>
</dbReference>
<dbReference type="GO" id="GO:0005739">
    <property type="term" value="C:mitochondrion"/>
    <property type="evidence" value="ECO:0007669"/>
    <property type="project" value="UniProtKB-SubCell"/>
</dbReference>
<dbReference type="GO" id="GO:0005840">
    <property type="term" value="C:ribosome"/>
    <property type="evidence" value="ECO:0000318"/>
    <property type="project" value="GO_Central"/>
</dbReference>
<dbReference type="GO" id="GO:0015935">
    <property type="term" value="C:small ribosomal subunit"/>
    <property type="evidence" value="ECO:0007669"/>
    <property type="project" value="InterPro"/>
</dbReference>
<dbReference type="GO" id="GO:0003735">
    <property type="term" value="F:structural constituent of ribosome"/>
    <property type="evidence" value="ECO:0000318"/>
    <property type="project" value="GO_Central"/>
</dbReference>
<dbReference type="GO" id="GO:0006412">
    <property type="term" value="P:translation"/>
    <property type="evidence" value="ECO:0000318"/>
    <property type="project" value="GO_Central"/>
</dbReference>
<dbReference type="CDD" id="cd03368">
    <property type="entry name" value="Ribosomal_S12"/>
    <property type="match status" value="1"/>
</dbReference>
<dbReference type="FunFam" id="2.40.50.140:FF:000099">
    <property type="entry name" value="Ribosomal protein S12, mitochondrial"/>
    <property type="match status" value="1"/>
</dbReference>
<dbReference type="Gene3D" id="2.40.50.140">
    <property type="entry name" value="Nucleic acid-binding proteins"/>
    <property type="match status" value="1"/>
</dbReference>
<dbReference type="HAMAP" id="MF_00403_B">
    <property type="entry name" value="Ribosomal_uS12_B"/>
    <property type="match status" value="1"/>
</dbReference>
<dbReference type="InterPro" id="IPR012340">
    <property type="entry name" value="NA-bd_OB-fold"/>
</dbReference>
<dbReference type="InterPro" id="IPR006032">
    <property type="entry name" value="Ribosomal_uS12"/>
</dbReference>
<dbReference type="InterPro" id="IPR005679">
    <property type="entry name" value="Ribosomal_uS12_bac"/>
</dbReference>
<dbReference type="NCBIfam" id="TIGR00981">
    <property type="entry name" value="rpsL_bact"/>
    <property type="match status" value="1"/>
</dbReference>
<dbReference type="PANTHER" id="PTHR11652">
    <property type="entry name" value="30S RIBOSOMAL PROTEIN S12 FAMILY MEMBER"/>
    <property type="match status" value="1"/>
</dbReference>
<dbReference type="Pfam" id="PF00164">
    <property type="entry name" value="Ribosom_S12_S23"/>
    <property type="match status" value="1"/>
</dbReference>
<dbReference type="PIRSF" id="PIRSF002133">
    <property type="entry name" value="Ribosomal_S12/S23"/>
    <property type="match status" value="1"/>
</dbReference>
<dbReference type="PRINTS" id="PR01034">
    <property type="entry name" value="RIBOSOMALS12"/>
</dbReference>
<dbReference type="SUPFAM" id="SSF50249">
    <property type="entry name" value="Nucleic acid-binding proteins"/>
    <property type="match status" value="1"/>
</dbReference>
<dbReference type="PROSITE" id="PS00055">
    <property type="entry name" value="RIBOSOMAL_S12"/>
    <property type="match status" value="1"/>
</dbReference>
<organism>
    <name type="scientific">Arabidopsis thaliana</name>
    <name type="common">Mouse-ear cress</name>
    <dbReference type="NCBI Taxonomy" id="3702"/>
    <lineage>
        <taxon>Eukaryota</taxon>
        <taxon>Viridiplantae</taxon>
        <taxon>Streptophyta</taxon>
        <taxon>Embryophyta</taxon>
        <taxon>Tracheophyta</taxon>
        <taxon>Spermatophyta</taxon>
        <taxon>Magnoliopsida</taxon>
        <taxon>eudicotyledons</taxon>
        <taxon>Gunneridae</taxon>
        <taxon>Pentapetalae</taxon>
        <taxon>rosids</taxon>
        <taxon>malvids</taxon>
        <taxon>Brassicales</taxon>
        <taxon>Brassicaceae</taxon>
        <taxon>Camelineae</taxon>
        <taxon>Arabidopsis</taxon>
    </lineage>
</organism>
<feature type="chain" id="PRO_0000146433" description="Small ribosomal subunit protein uS12m">
    <location>
        <begin position="1"/>
        <end position="125"/>
    </location>
</feature>
<comment type="function">
    <text>Protein S12 is involved in the translation initiation step.</text>
</comment>
<comment type="subunit">
    <text evidence="5">Component of the mitochondrial ribosome small subunit.</text>
</comment>
<comment type="subcellular location">
    <subcellularLocation>
        <location evidence="4">Mitochondrion</location>
    </subcellularLocation>
</comment>
<comment type="RNA editing">
    <location>
        <position position="35" evidence="1 2 3"/>
    </location>
    <location>
        <position position="49" evidence="1 2 3"/>
    </location>
    <location>
        <position position="66" evidence="1 2 3"/>
    </location>
    <location>
        <position position="74" evidence="1 2 3"/>
    </location>
    <location>
        <position position="90" evidence="1 2 3"/>
    </location>
    <location>
        <position position="95" evidence="1 2 3"/>
    </location>
</comment>
<comment type="miscellaneous">
    <text>A stretch of 270 kb of the mitochondrial genome is duplicated within the centromere of chromosome 2 resulting in the duplication of the gene. The expression of this duplicated gene (At2g07675) is not demonstrated. It is also probably not RNA edited and therefore differs in all the positions known to be edited.</text>
</comment>
<comment type="similarity">
    <text evidence="5">Belongs to the universal ribosomal protein uS12 family.</text>
</comment>
<protein>
    <recommendedName>
        <fullName evidence="4">Small ribosomal subunit protein uS12m</fullName>
    </recommendedName>
    <alternativeName>
        <fullName>Ribosomal protein S12, mitochondrial</fullName>
    </alternativeName>
</protein>
<proteinExistence type="evidence at protein level"/>
<geneLocation type="mitochondrion"/>
<name>RT12_ARATH</name>
<reference key="1">
    <citation type="journal article" date="1997" name="Nat. Genet.">
        <title>The mitochondrial genome of Arabidopsis thaliana contains 57 genes in 366,924 nucleotides.</title>
        <authorList>
            <person name="Unseld M."/>
            <person name="Marienfeld J.R."/>
            <person name="Brandt P."/>
            <person name="Brennicke A."/>
        </authorList>
    </citation>
    <scope>NUCLEOTIDE SEQUENCE [LARGE SCALE GENOMIC DNA]</scope>
    <source>
        <strain>cv. C24</strain>
    </source>
</reference>
<reference key="2">
    <citation type="journal article" date="2011" name="BMC Biol.">
        <title>Double-strand break repair processes drive evolution of the mitochondrial genome in Arabidopsis.</title>
        <authorList>
            <person name="Davila J.I."/>
            <person name="Arrieta-Montiel M.P."/>
            <person name="Wamboldt Y."/>
            <person name="Cao J."/>
            <person name="Hagmann J."/>
            <person name="Shedge V."/>
            <person name="Xu Y.Z."/>
            <person name="Weigel D."/>
            <person name="Mackenzie S.A."/>
        </authorList>
    </citation>
    <scope>NUCLEOTIDE SEQUENCE [LARGE SCALE GENOMIC DNA]</scope>
    <source>
        <strain>cv. C24</strain>
        <strain>cv. Columbia</strain>
        <strain>cv. Landsberg erecta</strain>
    </source>
</reference>
<reference key="3">
    <citation type="journal article" date="2018" name="Plant Cell">
        <title>Correction of persistent errors in Arabidopsis reference mitochondrial genomes.</title>
        <authorList>
            <person name="Sloan D.B."/>
            <person name="Wu Z."/>
            <person name="Sharbrough J."/>
        </authorList>
    </citation>
    <scope>NUCLEOTIDE SEQUENCE [LARGE SCALE GENOMIC DNA]</scope>
    <scope>RNA EDITING</scope>
    <source>
        <strain>cv. Columbia</strain>
    </source>
</reference>
<reference key="4">
    <citation type="journal article" date="1999" name="Nature">
        <title>Sequence and analysis of chromosome 2 of the plant Arabidopsis thaliana.</title>
        <authorList>
            <person name="Lin X."/>
            <person name="Kaul S."/>
            <person name="Rounsley S.D."/>
            <person name="Shea T.P."/>
            <person name="Benito M.-I."/>
            <person name="Town C.D."/>
            <person name="Fujii C.Y."/>
            <person name="Mason T.M."/>
            <person name="Bowman C.L."/>
            <person name="Barnstead M.E."/>
            <person name="Feldblyum T.V."/>
            <person name="Buell C.R."/>
            <person name="Ketchum K.A."/>
            <person name="Lee J.J."/>
            <person name="Ronning C.M."/>
            <person name="Koo H.L."/>
            <person name="Moffat K.S."/>
            <person name="Cronin L.A."/>
            <person name="Shen M."/>
            <person name="Pai G."/>
            <person name="Van Aken S."/>
            <person name="Umayam L."/>
            <person name="Tallon L.J."/>
            <person name="Gill J.E."/>
            <person name="Adams M.D."/>
            <person name="Carrera A.J."/>
            <person name="Creasy T.H."/>
            <person name="Goodman H.M."/>
            <person name="Somerville C.R."/>
            <person name="Copenhaver G.P."/>
            <person name="Preuss D."/>
            <person name="Nierman W.C."/>
            <person name="White O."/>
            <person name="Eisen J.A."/>
            <person name="Salzberg S.L."/>
            <person name="Fraser C.M."/>
            <person name="Venter J.C."/>
        </authorList>
    </citation>
    <scope>NUCLEOTIDE SEQUENCE [LARGE SCALE GENOMIC DNA] (AT2G07675)</scope>
    <source>
        <strain>cv. Columbia</strain>
    </source>
</reference>
<reference key="5">
    <citation type="journal article" date="2017" name="Plant J.">
        <title>Araport11: a complete reannotation of the Arabidopsis thaliana reference genome.</title>
        <authorList>
            <person name="Cheng C.Y."/>
            <person name="Krishnakumar V."/>
            <person name="Chan A.P."/>
            <person name="Thibaud-Nissen F."/>
            <person name="Schobel S."/>
            <person name="Town C.D."/>
        </authorList>
    </citation>
    <scope>GENOME REANNOTATION (AT2G07675)</scope>
    <source>
        <strain>cv. Columbia</strain>
    </source>
</reference>
<reference key="6">
    <citation type="journal article" date="2008" name="Genetics">
        <title>Genetic architecture of mitochondrial editing in Arabidopsis thaliana.</title>
        <authorList>
            <person name="Bentolila S."/>
            <person name="Elliott L.E."/>
            <person name="Hanson M.R."/>
        </authorList>
    </citation>
    <scope>NUCLEOTIDE SEQUENCE [MRNA] OF 18-118</scope>
    <scope>RNA EDITING</scope>
    <source>
        <strain>cv. Columbia</strain>
        <strain>cv. Landsberg erecta</strain>
        <tissue>Rosette leaf</tissue>
    </source>
</reference>
<reference key="7">
    <citation type="journal article" date="1999" name="Proc. Natl. Acad. Sci. U.S.A.">
        <title>RNA editing in Arabidopsis mitochondria effects 441 C to U changes in ORFs.</title>
        <authorList>
            <person name="Giege P."/>
            <person name="Brennicke A."/>
        </authorList>
    </citation>
    <scope>RNA EDITING</scope>
</reference>
<reference key="8">
    <citation type="journal article" date="2023" name="Plant Cell">
        <title>An updated nomenclature for plant ribosomal protein genes.</title>
        <authorList>
            <person name="Scarpin M.R."/>
            <person name="Busche M."/>
            <person name="Martinez R.E."/>
            <person name="Harper L.C."/>
            <person name="Reiser L."/>
            <person name="Szakonyi D."/>
            <person name="Merchante C."/>
            <person name="Lan T."/>
            <person name="Xiong W."/>
            <person name="Mo B."/>
            <person name="Tang G."/>
            <person name="Chen X."/>
            <person name="Bailey-Serres J."/>
            <person name="Browning K.S."/>
            <person name="Brunkard J.O."/>
        </authorList>
    </citation>
    <scope>NOMENCLATURE</scope>
</reference>
<sequence length="125" mass="14248">MPTFNQLIRHGREEKRRTDRTRALDKCPQKTGVCLRVSTRTPKKPNSALRKIAKVRLSNRHDIFAYIPGEGHNLQEHSTVLIRGGRVKDLPGVKFHCIRGVKDLMGIPGRRRGRSKYGAEKPKSI</sequence>
<accession>P92532</accession>
<accession>A0A2P2CLH1</accession>
<accession>A7KNK5</accession>
<accession>F4IL88</accession>
<accession>Q8RUS9</accession>
<evidence type="ECO:0000269" key="1">
    <source>
    </source>
</evidence>
<evidence type="ECO:0000269" key="2">
    <source>
    </source>
</evidence>
<evidence type="ECO:0000269" key="3">
    <source>
    </source>
</evidence>
<evidence type="ECO:0000303" key="4">
    <source>
    </source>
</evidence>
<evidence type="ECO:0000305" key="5"/>
<evidence type="ECO:0000312" key="6">
    <source>
        <dbReference type="Araport" id="AT2G07675"/>
    </source>
</evidence>
<evidence type="ECO:0000312" key="7">
    <source>
        <dbReference type="Araport" id="ATMG00980"/>
    </source>
</evidence>
<keyword id="KW-0002">3D-structure</keyword>
<keyword id="KW-0496">Mitochondrion</keyword>
<keyword id="KW-1185">Reference proteome</keyword>
<keyword id="KW-0687">Ribonucleoprotein</keyword>
<keyword id="KW-0689">Ribosomal protein</keyword>
<keyword id="KW-0691">RNA editing</keyword>
<gene>
    <name type="primary">RPS12</name>
    <name evidence="7" type="ordered locus">AtMg00980</name>
</gene>
<gene>
    <name evidence="6" type="ordered locus">At2g07675</name>
</gene>